<protein>
    <recommendedName>
        <fullName>T-lymphocyte surface antigen Ly-9</fullName>
    </recommendedName>
    <alternativeName>
        <fullName>Cell surface molecule Ly-9</fullName>
    </alternativeName>
    <alternativeName>
        <fullName>Lymphocyte antigen 9</fullName>
    </alternativeName>
    <alternativeName>
        <fullName>SLAM family member 3</fullName>
        <shortName>SLAMF3</shortName>
    </alternativeName>
    <alternativeName>
        <fullName>Signaling lymphocytic activation molecule 3</fullName>
    </alternativeName>
    <cdAntigenName>CD229</cdAntigenName>
</protein>
<name>LY9_HUMAN</name>
<gene>
    <name type="primary">LY9</name>
    <name type="ORF">CDABP0070</name>
</gene>
<reference key="1">
    <citation type="journal article" date="2000" name="Immunogenetics">
        <title>Gene structure of the mouse leukocyte cell surface molecule Ly9.</title>
        <authorList>
            <person name="Tovar V."/>
            <person name="de la Fuente M.A."/>
            <person name="Pizcueta P."/>
            <person name="Bosch J."/>
            <person name="Engel P."/>
        </authorList>
    </citation>
    <scope>NUCLEOTIDE SEQUENCE [MRNA] (ISOFORM 1)</scope>
    <scope>VARIANT VAL-602</scope>
</reference>
<reference key="2">
    <citation type="journal article" date="2004" name="Nat. Genet.">
        <title>Complete sequencing and characterization of 21,243 full-length human cDNAs.</title>
        <authorList>
            <person name="Ota T."/>
            <person name="Suzuki Y."/>
            <person name="Nishikawa T."/>
            <person name="Otsuki T."/>
            <person name="Sugiyama T."/>
            <person name="Irie R."/>
            <person name="Wakamatsu A."/>
            <person name="Hayashi K."/>
            <person name="Sato H."/>
            <person name="Nagai K."/>
            <person name="Kimura K."/>
            <person name="Makita H."/>
            <person name="Sekine M."/>
            <person name="Obayashi M."/>
            <person name="Nishi T."/>
            <person name="Shibahara T."/>
            <person name="Tanaka T."/>
            <person name="Ishii S."/>
            <person name="Yamamoto J."/>
            <person name="Saito K."/>
            <person name="Kawai Y."/>
            <person name="Isono Y."/>
            <person name="Nakamura Y."/>
            <person name="Nagahari K."/>
            <person name="Murakami K."/>
            <person name="Yasuda T."/>
            <person name="Iwayanagi T."/>
            <person name="Wagatsuma M."/>
            <person name="Shiratori A."/>
            <person name="Sudo H."/>
            <person name="Hosoiri T."/>
            <person name="Kaku Y."/>
            <person name="Kodaira H."/>
            <person name="Kondo H."/>
            <person name="Sugawara M."/>
            <person name="Takahashi M."/>
            <person name="Kanda K."/>
            <person name="Yokoi T."/>
            <person name="Furuya T."/>
            <person name="Kikkawa E."/>
            <person name="Omura Y."/>
            <person name="Abe K."/>
            <person name="Kamihara K."/>
            <person name="Katsuta N."/>
            <person name="Sato K."/>
            <person name="Tanikawa M."/>
            <person name="Yamazaki M."/>
            <person name="Ninomiya K."/>
            <person name="Ishibashi T."/>
            <person name="Yamashita H."/>
            <person name="Murakawa K."/>
            <person name="Fujimori K."/>
            <person name="Tanai H."/>
            <person name="Kimata M."/>
            <person name="Watanabe M."/>
            <person name="Hiraoka S."/>
            <person name="Chiba Y."/>
            <person name="Ishida S."/>
            <person name="Ono Y."/>
            <person name="Takiguchi S."/>
            <person name="Watanabe S."/>
            <person name="Yosida M."/>
            <person name="Hotuta T."/>
            <person name="Kusano J."/>
            <person name="Kanehori K."/>
            <person name="Takahashi-Fujii A."/>
            <person name="Hara H."/>
            <person name="Tanase T.-O."/>
            <person name="Nomura Y."/>
            <person name="Togiya S."/>
            <person name="Komai F."/>
            <person name="Hara R."/>
            <person name="Takeuchi K."/>
            <person name="Arita M."/>
            <person name="Imose N."/>
            <person name="Musashino K."/>
            <person name="Yuuki H."/>
            <person name="Oshima A."/>
            <person name="Sasaki N."/>
            <person name="Aotsuka S."/>
            <person name="Yoshikawa Y."/>
            <person name="Matsunawa H."/>
            <person name="Ichihara T."/>
            <person name="Shiohata N."/>
            <person name="Sano S."/>
            <person name="Moriya S."/>
            <person name="Momiyama H."/>
            <person name="Satoh N."/>
            <person name="Takami S."/>
            <person name="Terashima Y."/>
            <person name="Suzuki O."/>
            <person name="Nakagawa S."/>
            <person name="Senoh A."/>
            <person name="Mizoguchi H."/>
            <person name="Goto Y."/>
            <person name="Shimizu F."/>
            <person name="Wakebe H."/>
            <person name="Hishigaki H."/>
            <person name="Watanabe T."/>
            <person name="Sugiyama A."/>
            <person name="Takemoto M."/>
            <person name="Kawakami B."/>
            <person name="Yamazaki M."/>
            <person name="Watanabe K."/>
            <person name="Kumagai A."/>
            <person name="Itakura S."/>
            <person name="Fukuzumi Y."/>
            <person name="Fujimori Y."/>
            <person name="Komiyama M."/>
            <person name="Tashiro H."/>
            <person name="Tanigami A."/>
            <person name="Fujiwara T."/>
            <person name="Ono T."/>
            <person name="Yamada K."/>
            <person name="Fujii Y."/>
            <person name="Ozaki K."/>
            <person name="Hirao M."/>
            <person name="Ohmori Y."/>
            <person name="Kawabata A."/>
            <person name="Hikiji T."/>
            <person name="Kobatake N."/>
            <person name="Inagaki H."/>
            <person name="Ikema Y."/>
            <person name="Okamoto S."/>
            <person name="Okitani R."/>
            <person name="Kawakami T."/>
            <person name="Noguchi S."/>
            <person name="Itoh T."/>
            <person name="Shigeta K."/>
            <person name="Senba T."/>
            <person name="Matsumura K."/>
            <person name="Nakajima Y."/>
            <person name="Mizuno T."/>
            <person name="Morinaga M."/>
            <person name="Sasaki M."/>
            <person name="Togashi T."/>
            <person name="Oyama M."/>
            <person name="Hata H."/>
            <person name="Watanabe M."/>
            <person name="Komatsu T."/>
            <person name="Mizushima-Sugano J."/>
            <person name="Satoh T."/>
            <person name="Shirai Y."/>
            <person name="Takahashi Y."/>
            <person name="Nakagawa K."/>
            <person name="Okumura K."/>
            <person name="Nagase T."/>
            <person name="Nomura N."/>
            <person name="Kikuchi H."/>
            <person name="Masuho Y."/>
            <person name="Yamashita R."/>
            <person name="Nakai K."/>
            <person name="Yada T."/>
            <person name="Nakamura Y."/>
            <person name="Ohara O."/>
            <person name="Isogai T."/>
            <person name="Sugano S."/>
        </authorList>
    </citation>
    <scope>NUCLEOTIDE SEQUENCE [LARGE SCALE MRNA] (ISOFORM 1)</scope>
    <source>
        <tissue>Spleen</tissue>
    </source>
</reference>
<reference key="3">
    <citation type="journal article" date="2006" name="Nature">
        <title>The DNA sequence and biological annotation of human chromosome 1.</title>
        <authorList>
            <person name="Gregory S.G."/>
            <person name="Barlow K.F."/>
            <person name="McLay K.E."/>
            <person name="Kaul R."/>
            <person name="Swarbreck D."/>
            <person name="Dunham A."/>
            <person name="Scott C.E."/>
            <person name="Howe K.L."/>
            <person name="Woodfine K."/>
            <person name="Spencer C.C.A."/>
            <person name="Jones M.C."/>
            <person name="Gillson C."/>
            <person name="Searle S."/>
            <person name="Zhou Y."/>
            <person name="Kokocinski F."/>
            <person name="McDonald L."/>
            <person name="Evans R."/>
            <person name="Phillips K."/>
            <person name="Atkinson A."/>
            <person name="Cooper R."/>
            <person name="Jones C."/>
            <person name="Hall R.E."/>
            <person name="Andrews T.D."/>
            <person name="Lloyd C."/>
            <person name="Ainscough R."/>
            <person name="Almeida J.P."/>
            <person name="Ambrose K.D."/>
            <person name="Anderson F."/>
            <person name="Andrew R.W."/>
            <person name="Ashwell R.I.S."/>
            <person name="Aubin K."/>
            <person name="Babbage A.K."/>
            <person name="Bagguley C.L."/>
            <person name="Bailey J."/>
            <person name="Beasley H."/>
            <person name="Bethel G."/>
            <person name="Bird C.P."/>
            <person name="Bray-Allen S."/>
            <person name="Brown J.Y."/>
            <person name="Brown A.J."/>
            <person name="Buckley D."/>
            <person name="Burton J."/>
            <person name="Bye J."/>
            <person name="Carder C."/>
            <person name="Chapman J.C."/>
            <person name="Clark S.Y."/>
            <person name="Clarke G."/>
            <person name="Clee C."/>
            <person name="Cobley V."/>
            <person name="Collier R.E."/>
            <person name="Corby N."/>
            <person name="Coville G.J."/>
            <person name="Davies J."/>
            <person name="Deadman R."/>
            <person name="Dunn M."/>
            <person name="Earthrowl M."/>
            <person name="Ellington A.G."/>
            <person name="Errington H."/>
            <person name="Frankish A."/>
            <person name="Frankland J."/>
            <person name="French L."/>
            <person name="Garner P."/>
            <person name="Garnett J."/>
            <person name="Gay L."/>
            <person name="Ghori M.R.J."/>
            <person name="Gibson R."/>
            <person name="Gilby L.M."/>
            <person name="Gillett W."/>
            <person name="Glithero R.J."/>
            <person name="Grafham D.V."/>
            <person name="Griffiths C."/>
            <person name="Griffiths-Jones S."/>
            <person name="Grocock R."/>
            <person name="Hammond S."/>
            <person name="Harrison E.S.I."/>
            <person name="Hart E."/>
            <person name="Haugen E."/>
            <person name="Heath P.D."/>
            <person name="Holmes S."/>
            <person name="Holt K."/>
            <person name="Howden P.J."/>
            <person name="Hunt A.R."/>
            <person name="Hunt S.E."/>
            <person name="Hunter G."/>
            <person name="Isherwood J."/>
            <person name="James R."/>
            <person name="Johnson C."/>
            <person name="Johnson D."/>
            <person name="Joy A."/>
            <person name="Kay M."/>
            <person name="Kershaw J.K."/>
            <person name="Kibukawa M."/>
            <person name="Kimberley A.M."/>
            <person name="King A."/>
            <person name="Knights A.J."/>
            <person name="Lad H."/>
            <person name="Laird G."/>
            <person name="Lawlor S."/>
            <person name="Leongamornlert D.A."/>
            <person name="Lloyd D.M."/>
            <person name="Loveland J."/>
            <person name="Lovell J."/>
            <person name="Lush M.J."/>
            <person name="Lyne R."/>
            <person name="Martin S."/>
            <person name="Mashreghi-Mohammadi M."/>
            <person name="Matthews L."/>
            <person name="Matthews N.S.W."/>
            <person name="McLaren S."/>
            <person name="Milne S."/>
            <person name="Mistry S."/>
            <person name="Moore M.J.F."/>
            <person name="Nickerson T."/>
            <person name="O'Dell C.N."/>
            <person name="Oliver K."/>
            <person name="Palmeiri A."/>
            <person name="Palmer S.A."/>
            <person name="Parker A."/>
            <person name="Patel D."/>
            <person name="Pearce A.V."/>
            <person name="Peck A.I."/>
            <person name="Pelan S."/>
            <person name="Phelps K."/>
            <person name="Phillimore B.J."/>
            <person name="Plumb R."/>
            <person name="Rajan J."/>
            <person name="Raymond C."/>
            <person name="Rouse G."/>
            <person name="Saenphimmachak C."/>
            <person name="Sehra H.K."/>
            <person name="Sheridan E."/>
            <person name="Shownkeen R."/>
            <person name="Sims S."/>
            <person name="Skuce C.D."/>
            <person name="Smith M."/>
            <person name="Steward C."/>
            <person name="Subramanian S."/>
            <person name="Sycamore N."/>
            <person name="Tracey A."/>
            <person name="Tromans A."/>
            <person name="Van Helmond Z."/>
            <person name="Wall M."/>
            <person name="Wallis J.M."/>
            <person name="White S."/>
            <person name="Whitehead S.L."/>
            <person name="Wilkinson J.E."/>
            <person name="Willey D.L."/>
            <person name="Williams H."/>
            <person name="Wilming L."/>
            <person name="Wray P.W."/>
            <person name="Wu Z."/>
            <person name="Coulson A."/>
            <person name="Vaudin M."/>
            <person name="Sulston J.E."/>
            <person name="Durbin R.M."/>
            <person name="Hubbard T."/>
            <person name="Wooster R."/>
            <person name="Dunham I."/>
            <person name="Carter N.P."/>
            <person name="McVean G."/>
            <person name="Ross M.T."/>
            <person name="Harrow J."/>
            <person name="Olson M.V."/>
            <person name="Beck S."/>
            <person name="Rogers J."/>
            <person name="Bentley D.R."/>
        </authorList>
    </citation>
    <scope>NUCLEOTIDE SEQUENCE [LARGE SCALE GENOMIC DNA]</scope>
</reference>
<reference key="4">
    <citation type="submission" date="2005-09" db="EMBL/GenBank/DDBJ databases">
        <authorList>
            <person name="Mural R.J."/>
            <person name="Istrail S."/>
            <person name="Sutton G.G."/>
            <person name="Florea L."/>
            <person name="Halpern A.L."/>
            <person name="Mobarry C.M."/>
            <person name="Lippert R."/>
            <person name="Walenz B."/>
            <person name="Shatkay H."/>
            <person name="Dew I."/>
            <person name="Miller J.R."/>
            <person name="Flanigan M.J."/>
            <person name="Edwards N.J."/>
            <person name="Bolanos R."/>
            <person name="Fasulo D."/>
            <person name="Halldorsson B.V."/>
            <person name="Hannenhalli S."/>
            <person name="Turner R."/>
            <person name="Yooseph S."/>
            <person name="Lu F."/>
            <person name="Nusskern D.R."/>
            <person name="Shue B.C."/>
            <person name="Zheng X.H."/>
            <person name="Zhong F."/>
            <person name="Delcher A.L."/>
            <person name="Huson D.H."/>
            <person name="Kravitz S.A."/>
            <person name="Mouchard L."/>
            <person name="Reinert K."/>
            <person name="Remington K.A."/>
            <person name="Clark A.G."/>
            <person name="Waterman M.S."/>
            <person name="Eichler E.E."/>
            <person name="Adams M.D."/>
            <person name="Hunkapiller M.W."/>
            <person name="Myers E.W."/>
            <person name="Venter J.C."/>
        </authorList>
    </citation>
    <scope>NUCLEOTIDE SEQUENCE [LARGE SCALE GENOMIC DNA]</scope>
</reference>
<reference key="5">
    <citation type="journal article" date="2004" name="Genome Res.">
        <title>The status, quality, and expansion of the NIH full-length cDNA project: the Mammalian Gene Collection (MGC).</title>
        <authorList>
            <consortium name="The MGC Project Team"/>
        </authorList>
    </citation>
    <scope>NUCLEOTIDE SEQUENCE [LARGE SCALE MRNA] (ISOFORM 4)</scope>
    <source>
        <tissue>Blood</tissue>
    </source>
</reference>
<reference key="6">
    <citation type="journal article" date="1996" name="Immunogenetics">
        <title>Isolation and characterization of cDNA clones for Humly9: the human homologue of mouse Ly9.</title>
        <authorList>
            <person name="Sandrin M.S."/>
            <person name="Henning M.M."/>
            <person name="Lo M.F."/>
            <person name="Baker E."/>
            <person name="Sutherland G.R."/>
            <person name="McKenzie I.F."/>
        </authorList>
    </citation>
    <scope>NUCLEOTIDE SEQUENCE [MRNA] OF 32-654 (ISOFORM 2)</scope>
    <scope>VARIANT VAL-602</scope>
</reference>
<reference key="7">
    <citation type="submission" date="2000-07" db="EMBL/GenBank/DDBJ databases">
        <title>Pediatric leukemia cDNA sequencing project.</title>
        <authorList>
            <person name="Zhou J."/>
            <person name="Yu W."/>
            <person name="Tang H."/>
            <person name="Mei G."/>
            <person name="Tsang Y.T.M."/>
            <person name="Bouck J."/>
            <person name="Gibbs R.A."/>
            <person name="Margolin J.F."/>
        </authorList>
    </citation>
    <scope>NUCLEOTIDE SEQUENCE [LARGE SCALE MRNA] OF 99-655 (ISOFORM 3)</scope>
    <source>
        <tissue>Leukemia</tissue>
    </source>
</reference>
<reference key="8">
    <citation type="journal article" date="2001" name="Blood">
        <title>Cell surface receptors Ly-9 and CD84 recruit the X-linked lymphoproliferative disease gene product SAP.</title>
        <authorList>
            <person name="Sayos J."/>
            <person name="Martin M."/>
            <person name="Chen A."/>
            <person name="Simarro M."/>
            <person name="Howie D."/>
            <person name="Morra M."/>
            <person name="Engel P."/>
            <person name="Terhorst C."/>
        </authorList>
    </citation>
    <scope>INTERACTION WITH SH2D1A AND PTPN11</scope>
    <scope>PHOSPHORYLATION</scope>
</reference>
<reference key="9">
    <citation type="journal article" date="2003" name="J. Biol. Chem.">
        <title>Dual functional roles for the X-linked lymphoproliferative syndrome gene product SAP/SH2D1A in signaling through the signaling lymphocyte activation molecule (SLAM) family of immune receptors.</title>
        <authorList>
            <person name="Li C."/>
            <person name="Iosef C."/>
            <person name="Jia C.Y."/>
            <person name="Han V.K."/>
            <person name="Li S.S."/>
        </authorList>
    </citation>
    <scope>INTERACTION WITH SH2D1A; SH2D1B AND INPP5D</scope>
    <scope>PHOSPHORYLATION AT TYR-603</scope>
</reference>
<reference key="10">
    <citation type="journal article" date="2009" name="Nat. Biotechnol.">
        <title>Mass-spectrometric identification and relative quantification of N-linked cell surface glycoproteins.</title>
        <authorList>
            <person name="Wollscheid B."/>
            <person name="Bausch-Fluck D."/>
            <person name="Henderson C."/>
            <person name="O'Brien R."/>
            <person name="Bibel M."/>
            <person name="Schiess R."/>
            <person name="Aebersold R."/>
            <person name="Watts J.D."/>
        </authorList>
    </citation>
    <scope>GLYCOSYLATION [LARGE SCALE ANALYSIS] AT ASN-285</scope>
    <source>
        <tissue>Leukemic T-cell</tissue>
    </source>
</reference>
<reference key="11">
    <citation type="journal article" date="2012" name="J. Biol. Chem.">
        <title>CD3-T cell receptor co-stimulation through SLAMF3 and SLAMF6 receptors enhances RORgammat recruitment to the IL17A promoter in human T lymphocytes.</title>
        <authorList>
            <person name="Chatterjee M."/>
            <person name="Hedrich C.M."/>
            <person name="Rauen T."/>
            <person name="Ioannidis C."/>
            <person name="Terhorst C."/>
            <person name="Tsokos G.C."/>
        </authorList>
    </citation>
    <scope>FUNCTION</scope>
</reference>
<reference key="12">
    <citation type="journal article" date="2012" name="J. Immunol.">
        <title>Increased expression of SLAM receptors SLAMF3 and SLAMF6 in systemic lupus erythematosus T lymphocytes promotes Th17 differentiation.</title>
        <authorList>
            <person name="Chatterjee M."/>
            <person name="Rauen T."/>
            <person name="Kis-Toth K."/>
            <person name="Kyttaris V.C."/>
            <person name="Hedrich C.M."/>
            <person name="Terhorst C."/>
            <person name="Tsokos G.C."/>
        </authorList>
    </citation>
    <scope>FUNCTION</scope>
    <scope>TISSUE SPECIFICITY</scope>
</reference>
<reference key="13">
    <citation type="journal article" date="2015" name="Immunology">
        <title>A polymorphism in a phosphotyrosine signalling motif of CD229 (Ly9, SLAMF3) alters SH2 domain binding and T-cell activation.</title>
        <authorList>
            <person name="Margraf S."/>
            <person name="Garner L.I."/>
            <person name="Wilson T.J."/>
            <person name="Brown M.H."/>
        </authorList>
    </citation>
    <scope>INTERACTION WITH SH2D1A AND INPP5D</scope>
    <scope>CHARACTERIZATION OF VARIANT VAL-602</scope>
    <scope>DOMAIN</scope>
    <scope>PHOSPHORYLATION AT TYR-603</scope>
</reference>
<organism>
    <name type="scientific">Homo sapiens</name>
    <name type="common">Human</name>
    <dbReference type="NCBI Taxonomy" id="9606"/>
    <lineage>
        <taxon>Eukaryota</taxon>
        <taxon>Metazoa</taxon>
        <taxon>Chordata</taxon>
        <taxon>Craniata</taxon>
        <taxon>Vertebrata</taxon>
        <taxon>Euteleostomi</taxon>
        <taxon>Mammalia</taxon>
        <taxon>Eutheria</taxon>
        <taxon>Euarchontoglires</taxon>
        <taxon>Primates</taxon>
        <taxon>Haplorrhini</taxon>
        <taxon>Catarrhini</taxon>
        <taxon>Hominidae</taxon>
        <taxon>Homo</taxon>
    </lineage>
</organism>
<comment type="function">
    <text evidence="1 10 11">Self-ligand receptor of the signaling lymphocytic activation molecule (SLAM) family. SLAM receptors triggered by homo- or heterotypic cell-cell interactions are modulating the activation and differentiation of a wide variety of immune cells and thus are involved in the regulation and interconnection of both innate and adaptive immune response. Activities are controlled by presence or absence of small cytoplasmic adapter proteins, SH2D1A/SAP and/or SH2D1B/EAT-2. May participate in adhesion reactions between T lymphocytes and accessory cells by homophilic interaction. Promotes T-cell differentiation into a helper T-cell Th17 phenotype leading to increased IL-17 secretion; the costimulatory activity requires SH2D1A (PubMed:22184727). Promotes recruitment of RORC to the IL-17 promoter (PubMed:22989874). May be involved in the maintenance of peripheral cell tolerance by serving as a negative regulator of the immune response. May disable autoantibody responses and inhibit IFN-gamma secretion by CD4(+) T-cells. May negatively regulate the size of thymic innate CD8(+) T-cells and the development of invariant natural killer T (iNKT) cells (By similarity).</text>
</comment>
<comment type="subunit">
    <text evidence="7 8 12">Interacts with SH2D1A, SH2D1B and INPP5D. Interacts (via phosphorylated cytoplasmic domain) with PTPN11; the interaction is blocked by SH2D1A.</text>
</comment>
<comment type="subcellular location">
    <subcellularLocation>
        <location>Membrane</location>
        <topology>Single-pass type I membrane protein</topology>
    </subcellularLocation>
    <subcellularLocation>
        <location evidence="17">Cell membrane</location>
    </subcellularLocation>
</comment>
<comment type="alternative products">
    <event type="alternative splicing"/>
    <isoform>
        <id>Q9HBG7-1</id>
        <name>1</name>
        <sequence type="displayed"/>
    </isoform>
    <isoform>
        <id>Q9HBG7-2</id>
        <name>2</name>
        <sequence type="described" ref="VSP_002525"/>
    </isoform>
    <isoform>
        <id>Q9HBG7-3</id>
        <name>3</name>
        <sequence type="described" ref="VSP_002524 VSP_002525 VSP_002526"/>
    </isoform>
    <isoform>
        <id>Q9HBG7-4</id>
        <name>4</name>
        <sequence type="described" ref="VSP_043328"/>
    </isoform>
    <text>Experimental confirmation may be lacking for some isoforms.</text>
</comment>
<comment type="tissue specificity">
    <text evidence="10">Increased surface expression on T-cells of systemic lupus erythematosus (SLE) patients.</text>
</comment>
<comment type="domain">
    <text evidence="2 12">The ITSMs (immunoreceptor tyrosine-based switch motifs) with the consensus sequence T-X-Y-X-X-[VI] present in SLAM family receptors have overlapping specificity for activating and inhibitory SH2 domain-containing binding partners. Especially they mediate the interaction with the SH2 domain of SH2D1A and SH2D1B. A 'three-pronged' mechanism is proposed involving threonine (position -2), phosphorylated tyrosine (position 0) and valine/isoleucine (position +3).</text>
</comment>
<sequence length="655" mass="72139">MVAPKSHTDDWAPGPFSSKPQRSQLQIFSSVLQTSLLFLLMGLRASGKDSAPTVVSGILGGSVTLPLNISVDTEIENVIWIGPKNALAFARPKENVTIMVKSYLGRLDITKWSYSLCISNLTLNDAGSYKAQINQRNFEVTTEEEFTLFVYEQLQEPQVTMKSVKVSENFSCNITLMCSVKGAEKSVLYSWTPREPHASESNGGSILTVSRTPCDPDLPYICTAQNPVSQRSSLPVHVGQFCTDPGASRGGTTGETVVGVLGEPVTLPLALPACRDTEKVVWLFNTSIISKEREEAATADPLIKSRDPYKNRVWVSSQDCSLKISQLKIEDAGPYHAYVCSEASSVTSMTHVTLLIYRRLRKPKITWSLRHSEDGICRISLTCSVEDGGNTVMYTWTPLQKEAVVSQGESHLNVSWRSSENHPNLTCTASNPVSRSSHQFLSENICSGPERNTKLWIGLFLMVCLLCVGIFSWCIWKRKGRCSVPAFCSSQAEAPADTPEPTAGHTLYSVLSQGYEKLDTPLRPARQQPTPTSDSSSDSNLTTEEDEDRPEVHKPISGRYEVFDQVTQEGAGHDPAPEGQADYDPVTPYVTEVESVVGENTMYAQVFNLQGKTPVSQKEESSATIYCSIRKPQVVPPPQQNDLEIPESPTYENFT</sequence>
<evidence type="ECO:0000250" key="1">
    <source>
        <dbReference type="UniProtKB" id="Q01965"/>
    </source>
</evidence>
<evidence type="ECO:0000250" key="2">
    <source>
        <dbReference type="UniProtKB" id="Q13291"/>
    </source>
</evidence>
<evidence type="ECO:0000255" key="3"/>
<evidence type="ECO:0000255" key="4">
    <source>
        <dbReference type="PROSITE-ProRule" id="PRU00114"/>
    </source>
</evidence>
<evidence type="ECO:0000256" key="5">
    <source>
        <dbReference type="SAM" id="MobiDB-lite"/>
    </source>
</evidence>
<evidence type="ECO:0000269" key="6">
    <source>
    </source>
</evidence>
<evidence type="ECO:0000269" key="7">
    <source>
    </source>
</evidence>
<evidence type="ECO:0000269" key="8">
    <source>
    </source>
</evidence>
<evidence type="ECO:0000269" key="9">
    <source>
    </source>
</evidence>
<evidence type="ECO:0000269" key="10">
    <source>
    </source>
</evidence>
<evidence type="ECO:0000269" key="11">
    <source>
    </source>
</evidence>
<evidence type="ECO:0000269" key="12">
    <source>
    </source>
</evidence>
<evidence type="ECO:0000269" key="13">
    <source>
    </source>
</evidence>
<evidence type="ECO:0000303" key="14">
    <source>
    </source>
</evidence>
<evidence type="ECO:0000303" key="15">
    <source>
    </source>
</evidence>
<evidence type="ECO:0000303" key="16">
    <source ref="7"/>
</evidence>
<evidence type="ECO:0000305" key="17"/>
<evidence type="ECO:0000305" key="18">
    <source>
    </source>
</evidence>
<evidence type="ECO:0000305" key="19">
    <source>
    </source>
</evidence>
<feature type="signal peptide" evidence="3">
    <location>
        <begin position="1"/>
        <end position="47"/>
    </location>
</feature>
<feature type="chain" id="PRO_0000014851" description="T-lymphocyte surface antigen Ly-9">
    <location>
        <begin position="48"/>
        <end position="655"/>
    </location>
</feature>
<feature type="topological domain" description="Extracellular" evidence="3">
    <location>
        <begin position="48"/>
        <end position="454"/>
    </location>
</feature>
<feature type="transmembrane region" description="Helical" evidence="3">
    <location>
        <begin position="455"/>
        <end position="476"/>
    </location>
</feature>
<feature type="topological domain" description="Cytoplasmic" evidence="3">
    <location>
        <begin position="477"/>
        <end position="655"/>
    </location>
</feature>
<feature type="domain" description="Ig-like V-type 1">
    <location>
        <begin position="48"/>
        <end position="158"/>
    </location>
</feature>
<feature type="domain" description="Ig-like C2-type 1">
    <location>
        <begin position="159"/>
        <end position="235"/>
    </location>
</feature>
<feature type="domain" description="Ig-like V-type 2">
    <location>
        <begin position="251"/>
        <end position="363"/>
    </location>
</feature>
<feature type="domain" description="Ig-like C2-type 2">
    <location>
        <begin position="364"/>
        <end position="452"/>
    </location>
</feature>
<feature type="region of interest" description="Disordered" evidence="5">
    <location>
        <begin position="521"/>
        <end position="556"/>
    </location>
</feature>
<feature type="region of interest" description="Disordered" evidence="5">
    <location>
        <begin position="633"/>
        <end position="655"/>
    </location>
</feature>
<feature type="short sequence motif" description="ITSM 1" evidence="2">
    <location>
        <begin position="601"/>
        <end position="606"/>
    </location>
</feature>
<feature type="short sequence motif" description="ITSM 2" evidence="2">
    <location>
        <begin position="624"/>
        <end position="629"/>
    </location>
</feature>
<feature type="compositionally biased region" description="Low complexity" evidence="5">
    <location>
        <begin position="530"/>
        <end position="542"/>
    </location>
</feature>
<feature type="modified residue" description="Phosphotyrosine" evidence="18 19">
    <location>
        <position position="603"/>
    </location>
</feature>
<feature type="glycosylation site" description="N-linked (GlcNAc...) asparagine" evidence="3">
    <location>
        <position position="68"/>
    </location>
</feature>
<feature type="glycosylation site" description="N-linked (GlcNAc...) asparagine" evidence="3">
    <location>
        <position position="95"/>
    </location>
</feature>
<feature type="glycosylation site" description="N-linked (GlcNAc...) asparagine" evidence="3">
    <location>
        <position position="120"/>
    </location>
</feature>
<feature type="glycosylation site" description="N-linked (GlcNAc...) asparagine" evidence="3">
    <location>
        <position position="169"/>
    </location>
</feature>
<feature type="glycosylation site" description="N-linked (GlcNAc...) asparagine" evidence="3">
    <location>
        <position position="173"/>
    </location>
</feature>
<feature type="glycosylation site" description="N-linked (GlcNAc...) asparagine" evidence="9">
    <location>
        <position position="285"/>
    </location>
</feature>
<feature type="glycosylation site" description="N-linked (GlcNAc...) asparagine" evidence="3">
    <location>
        <position position="413"/>
    </location>
</feature>
<feature type="glycosylation site" description="N-linked (GlcNAc...) asparagine" evidence="3">
    <location>
        <position position="424"/>
    </location>
</feature>
<feature type="disulfide bond" evidence="4">
    <location>
        <begin position="172"/>
        <end position="242"/>
    </location>
</feature>
<feature type="disulfide bond" evidence="4">
    <location>
        <begin position="178"/>
        <end position="222"/>
    </location>
</feature>
<feature type="disulfide bond" evidence="4">
    <location>
        <begin position="377"/>
        <end position="446"/>
    </location>
</feature>
<feature type="disulfide bond" evidence="4">
    <location>
        <begin position="383"/>
        <end position="427"/>
    </location>
</feature>
<feature type="splice variant" id="VSP_043328" description="In isoform 4." evidence="14">
    <original>EQLQEPQVTMKSVKVSENFSCNITLMCSVKGAEKSVLYSWTP</original>
    <variation>APFIEKLSVHVIEGDHRTLLEGSGLESIISTLAEPRVSVREG</variation>
    <location>
        <begin position="152"/>
        <end position="193"/>
    </location>
</feature>
<feature type="splice variant" id="VSP_002524" description="In isoform 3." evidence="16">
    <location>
        <begin position="359"/>
        <end position="448"/>
    </location>
</feature>
<feature type="splice variant" id="VSP_002525" description="In isoform 2 and isoform 3." evidence="15 16">
    <location>
        <begin position="500"/>
        <end position="513"/>
    </location>
</feature>
<feature type="splice variant" id="VSP_002526" description="In isoform 3." evidence="16">
    <original>PARQQPTPTSDSSSDSNLTTEEDEDRPEVHK</original>
    <variation>Q</variation>
    <location>
        <begin position="524"/>
        <end position="554"/>
    </location>
</feature>
<feature type="sequence variant" id="VAR_033612" description="Decreases interaction with SH2D1A and INPP5D 2-fold, reduced T-cell response; dbSNP:rs509749." evidence="6 12 13">
    <original>M</original>
    <variation>V</variation>
    <location>
        <position position="602"/>
    </location>
</feature>
<feature type="sequence conflict" description="In Ref. 1; AAG14995." evidence="17" ref="1">
    <location>
        <position position="171"/>
    </location>
</feature>
<proteinExistence type="evidence at protein level"/>
<keyword id="KW-1064">Adaptive immunity</keyword>
<keyword id="KW-0025">Alternative splicing</keyword>
<keyword id="KW-0130">Cell adhesion</keyword>
<keyword id="KW-1003">Cell membrane</keyword>
<keyword id="KW-1015">Disulfide bond</keyword>
<keyword id="KW-0325">Glycoprotein</keyword>
<keyword id="KW-0391">Immunity</keyword>
<keyword id="KW-0393">Immunoglobulin domain</keyword>
<keyword id="KW-0399">Innate immunity</keyword>
<keyword id="KW-0472">Membrane</keyword>
<keyword id="KW-0597">Phosphoprotein</keyword>
<keyword id="KW-1267">Proteomics identification</keyword>
<keyword id="KW-1185">Reference proteome</keyword>
<keyword id="KW-0677">Repeat</keyword>
<keyword id="KW-0732">Signal</keyword>
<keyword id="KW-0812">Transmembrane</keyword>
<keyword id="KW-1133">Transmembrane helix</keyword>
<accession>Q9HBG7</accession>
<accession>A8K7N3</accession>
<accession>Q14775</accession>
<accession>Q5VYI3</accession>
<accession>Q6P2J4</accession>
<accession>Q9H4N5</accession>
<accession>Q9NQ24</accession>
<dbReference type="EMBL" id="AF244129">
    <property type="protein sequence ID" value="AAG14995.1"/>
    <property type="molecule type" value="mRNA"/>
</dbReference>
<dbReference type="EMBL" id="AK292048">
    <property type="protein sequence ID" value="BAF84737.1"/>
    <property type="molecule type" value="mRNA"/>
</dbReference>
<dbReference type="EMBL" id="AL121985">
    <property type="status" value="NOT_ANNOTATED_CDS"/>
    <property type="molecule type" value="Genomic_DNA"/>
</dbReference>
<dbReference type="EMBL" id="AL354714">
    <property type="status" value="NOT_ANNOTATED_CDS"/>
    <property type="molecule type" value="Genomic_DNA"/>
</dbReference>
<dbReference type="EMBL" id="CH471121">
    <property type="protein sequence ID" value="EAW52699.1"/>
    <property type="molecule type" value="Genomic_DNA"/>
</dbReference>
<dbReference type="EMBL" id="BC064485">
    <property type="protein sequence ID" value="AAH64485.1"/>
    <property type="molecule type" value="mRNA"/>
</dbReference>
<dbReference type="EMBL" id="L42621">
    <property type="protein sequence ID" value="AAA92623.1"/>
    <property type="molecule type" value="mRNA"/>
</dbReference>
<dbReference type="EMBL" id="AY007142">
    <property type="protein sequence ID" value="AAG02002.1"/>
    <property type="molecule type" value="mRNA"/>
</dbReference>
<dbReference type="CCDS" id="CCDS30916.1">
    <molecule id="Q9HBG7-1"/>
</dbReference>
<dbReference type="CCDS" id="CCDS65695.1">
    <molecule id="Q9HBG7-2"/>
</dbReference>
<dbReference type="RefSeq" id="NP_001028839.1">
    <property type="nucleotide sequence ID" value="NM_001033667.2"/>
</dbReference>
<dbReference type="RefSeq" id="NP_001248385.1">
    <molecule id="Q9HBG7-2"/>
    <property type="nucleotide sequence ID" value="NM_001261456.2"/>
</dbReference>
<dbReference type="RefSeq" id="NP_002339.2">
    <molecule id="Q9HBG7-1"/>
    <property type="nucleotide sequence ID" value="NM_002348.4"/>
</dbReference>
<dbReference type="SMR" id="Q9HBG7"/>
<dbReference type="BioGRID" id="110241">
    <property type="interactions" value="11"/>
</dbReference>
<dbReference type="ELM" id="Q9HBG7"/>
<dbReference type="FunCoup" id="Q9HBG7">
    <property type="interactions" value="319"/>
</dbReference>
<dbReference type="IntAct" id="Q9HBG7">
    <property type="interactions" value="8"/>
</dbReference>
<dbReference type="STRING" id="9606.ENSP00000263285"/>
<dbReference type="GlyCosmos" id="Q9HBG7">
    <property type="glycosylation" value="9 sites, 1 glycan"/>
</dbReference>
<dbReference type="GlyGen" id="Q9HBG7">
    <property type="glycosylation" value="13 sites, 1 N-linked glycan (1 site), 2 O-linked glycans (3 sites)"/>
</dbReference>
<dbReference type="iPTMnet" id="Q9HBG7"/>
<dbReference type="PhosphoSitePlus" id="Q9HBG7"/>
<dbReference type="SwissPalm" id="Q9HBG7"/>
<dbReference type="BioMuta" id="LY9"/>
<dbReference type="DMDM" id="71152965"/>
<dbReference type="jPOST" id="Q9HBG7"/>
<dbReference type="MassIVE" id="Q9HBG7"/>
<dbReference type="PaxDb" id="9606-ENSP00000263285"/>
<dbReference type="PeptideAtlas" id="Q9HBG7"/>
<dbReference type="ProteomicsDB" id="81544">
    <molecule id="Q9HBG7-1"/>
</dbReference>
<dbReference type="ProteomicsDB" id="81545">
    <molecule id="Q9HBG7-2"/>
</dbReference>
<dbReference type="ProteomicsDB" id="81546">
    <molecule id="Q9HBG7-3"/>
</dbReference>
<dbReference type="ProteomicsDB" id="81547">
    <molecule id="Q9HBG7-4"/>
</dbReference>
<dbReference type="Antibodypedia" id="20495">
    <property type="antibodies" value="668 antibodies from 38 providers"/>
</dbReference>
<dbReference type="DNASU" id="4063"/>
<dbReference type="Ensembl" id="ENST00000263285.11">
    <molecule id="Q9HBG7-1"/>
    <property type="protein sequence ID" value="ENSP00000263285.5"/>
    <property type="gene ID" value="ENSG00000122224.19"/>
</dbReference>
<dbReference type="Ensembl" id="ENST00000368037.10">
    <molecule id="Q9HBG7-2"/>
    <property type="protein sequence ID" value="ENSP00000357016.5"/>
    <property type="gene ID" value="ENSG00000122224.19"/>
</dbReference>
<dbReference type="GeneID" id="4063"/>
<dbReference type="KEGG" id="hsa:4063"/>
<dbReference type="MANE-Select" id="ENST00000263285.11">
    <property type="protein sequence ID" value="ENSP00000263285.5"/>
    <property type="RefSeq nucleotide sequence ID" value="NM_002348.4"/>
    <property type="RefSeq protein sequence ID" value="NP_002339.2"/>
</dbReference>
<dbReference type="UCSC" id="uc001fwt.5">
    <molecule id="Q9HBG7-1"/>
    <property type="organism name" value="human"/>
</dbReference>
<dbReference type="AGR" id="HGNC:6730"/>
<dbReference type="CTD" id="4063"/>
<dbReference type="DisGeNET" id="4063"/>
<dbReference type="GeneCards" id="LY9"/>
<dbReference type="HGNC" id="HGNC:6730">
    <property type="gene designation" value="LY9"/>
</dbReference>
<dbReference type="HPA" id="ENSG00000122224">
    <property type="expression patterns" value="Tissue enhanced (bone marrow, intestine, lymphoid tissue)"/>
</dbReference>
<dbReference type="MIM" id="600684">
    <property type="type" value="gene"/>
</dbReference>
<dbReference type="neXtProt" id="NX_Q9HBG7"/>
<dbReference type="OpenTargets" id="ENSG00000122224"/>
<dbReference type="PharmGKB" id="PA30494"/>
<dbReference type="VEuPathDB" id="HostDB:ENSG00000122224"/>
<dbReference type="eggNOG" id="ENOG502SGRG">
    <property type="taxonomic scope" value="Eukaryota"/>
</dbReference>
<dbReference type="GeneTree" id="ENSGT01030000234540"/>
<dbReference type="HOGENOM" id="CLU_035502_0_0_1"/>
<dbReference type="InParanoid" id="Q9HBG7"/>
<dbReference type="OMA" id="IEHITWS"/>
<dbReference type="OrthoDB" id="9835793at2759"/>
<dbReference type="PAN-GO" id="Q9HBG7">
    <property type="GO annotations" value="2 GO annotations based on evolutionary models"/>
</dbReference>
<dbReference type="PhylomeDB" id="Q9HBG7"/>
<dbReference type="TreeFam" id="TF334964"/>
<dbReference type="PathwayCommons" id="Q9HBG7"/>
<dbReference type="SignaLink" id="Q9HBG7"/>
<dbReference type="BioGRID-ORCS" id="4063">
    <property type="hits" value="9 hits in 1142 CRISPR screens"/>
</dbReference>
<dbReference type="ChiTaRS" id="LY9">
    <property type="organism name" value="human"/>
</dbReference>
<dbReference type="GeneWiki" id="LY9"/>
<dbReference type="GenomeRNAi" id="4063"/>
<dbReference type="Pharos" id="Q9HBG7">
    <property type="development level" value="Tbio"/>
</dbReference>
<dbReference type="PRO" id="PR:Q9HBG7"/>
<dbReference type="Proteomes" id="UP000005640">
    <property type="component" value="Chromosome 1"/>
</dbReference>
<dbReference type="RNAct" id="Q9HBG7">
    <property type="molecule type" value="protein"/>
</dbReference>
<dbReference type="Bgee" id="ENSG00000122224">
    <property type="expression patterns" value="Expressed in granulocyte and 129 other cell types or tissues"/>
</dbReference>
<dbReference type="ExpressionAtlas" id="Q9HBG7">
    <property type="expression patterns" value="baseline and differential"/>
</dbReference>
<dbReference type="GO" id="GO:0009897">
    <property type="term" value="C:external side of plasma membrane"/>
    <property type="evidence" value="ECO:0000318"/>
    <property type="project" value="GO_Central"/>
</dbReference>
<dbReference type="GO" id="GO:0005886">
    <property type="term" value="C:plasma membrane"/>
    <property type="evidence" value="ECO:0000314"/>
    <property type="project" value="UniProtKB"/>
</dbReference>
<dbReference type="GO" id="GO:0007155">
    <property type="term" value="P:cell adhesion"/>
    <property type="evidence" value="ECO:0007669"/>
    <property type="project" value="UniProtKB-KW"/>
</dbReference>
<dbReference type="GO" id="GO:0006955">
    <property type="term" value="P:immune response"/>
    <property type="evidence" value="ECO:0000318"/>
    <property type="project" value="GO_Central"/>
</dbReference>
<dbReference type="GO" id="GO:0045087">
    <property type="term" value="P:innate immune response"/>
    <property type="evidence" value="ECO:0007669"/>
    <property type="project" value="UniProtKB-KW"/>
</dbReference>
<dbReference type="GO" id="GO:0032740">
    <property type="term" value="P:positive regulation of interleukin-17 production"/>
    <property type="evidence" value="ECO:0000314"/>
    <property type="project" value="UniProtKB"/>
</dbReference>
<dbReference type="GO" id="GO:0042110">
    <property type="term" value="P:T cell activation"/>
    <property type="evidence" value="ECO:0000318"/>
    <property type="project" value="GO_Central"/>
</dbReference>
<dbReference type="GO" id="GO:0072540">
    <property type="term" value="P:T-helper 17 cell lineage commitment"/>
    <property type="evidence" value="ECO:0000314"/>
    <property type="project" value="UniProtKB"/>
</dbReference>
<dbReference type="CDD" id="cd16842">
    <property type="entry name" value="Ig_SLAM-like_N"/>
    <property type="match status" value="1"/>
</dbReference>
<dbReference type="FunFam" id="2.60.40.10:FF:000470">
    <property type="entry name" value="SLAM family member 7"/>
    <property type="match status" value="2"/>
</dbReference>
<dbReference type="FunFam" id="2.60.40.10:FF:000820">
    <property type="entry name" value="SLAM family member 7"/>
    <property type="match status" value="2"/>
</dbReference>
<dbReference type="Gene3D" id="2.60.40.10">
    <property type="entry name" value="Immunoglobulins"/>
    <property type="match status" value="4"/>
</dbReference>
<dbReference type="InterPro" id="IPR015631">
    <property type="entry name" value="CD2/SLAM_rcpt"/>
</dbReference>
<dbReference type="InterPro" id="IPR007110">
    <property type="entry name" value="Ig-like_dom"/>
</dbReference>
<dbReference type="InterPro" id="IPR036179">
    <property type="entry name" value="Ig-like_dom_sf"/>
</dbReference>
<dbReference type="InterPro" id="IPR013783">
    <property type="entry name" value="Ig-like_fold"/>
</dbReference>
<dbReference type="InterPro" id="IPR003599">
    <property type="entry name" value="Ig_sub"/>
</dbReference>
<dbReference type="PANTHER" id="PTHR12080">
    <property type="entry name" value="SIGNALING LYMPHOCYTIC ACTIVATION MOLECULE"/>
    <property type="match status" value="1"/>
</dbReference>
<dbReference type="PANTHER" id="PTHR12080:SF114">
    <property type="entry name" value="T-LYMPHOCYTE SURFACE ANTIGEN LY-9"/>
    <property type="match status" value="1"/>
</dbReference>
<dbReference type="SMART" id="SM00409">
    <property type="entry name" value="IG"/>
    <property type="match status" value="2"/>
</dbReference>
<dbReference type="SUPFAM" id="SSF48726">
    <property type="entry name" value="Immunoglobulin"/>
    <property type="match status" value="4"/>
</dbReference>
<dbReference type="PROSITE" id="PS50835">
    <property type="entry name" value="IG_LIKE"/>
    <property type="match status" value="2"/>
</dbReference>